<evidence type="ECO:0000255" key="1">
    <source>
        <dbReference type="HAMAP-Rule" id="MF_00010"/>
    </source>
</evidence>
<name>Y5052_PARP8</name>
<keyword id="KW-0997">Cell inner membrane</keyword>
<keyword id="KW-1003">Cell membrane</keyword>
<keyword id="KW-0472">Membrane</keyword>
<keyword id="KW-1185">Reference proteome</keyword>
<keyword id="KW-0812">Transmembrane</keyword>
<keyword id="KW-1133">Transmembrane helix</keyword>
<reference key="1">
    <citation type="journal article" date="2014" name="Stand. Genomic Sci.">
        <title>Complete genome sequence of Burkholderia phymatum STM815(T), a broad host range and efficient nitrogen-fixing symbiont of Mimosa species.</title>
        <authorList>
            <person name="Moulin L."/>
            <person name="Klonowska A."/>
            <person name="Caroline B."/>
            <person name="Booth K."/>
            <person name="Vriezen J.A."/>
            <person name="Melkonian R."/>
            <person name="James E.K."/>
            <person name="Young J.P."/>
            <person name="Bena G."/>
            <person name="Hauser L."/>
            <person name="Land M."/>
            <person name="Kyrpides N."/>
            <person name="Bruce D."/>
            <person name="Chain P."/>
            <person name="Copeland A."/>
            <person name="Pitluck S."/>
            <person name="Woyke T."/>
            <person name="Lizotte-Waniewski M."/>
            <person name="Bristow J."/>
            <person name="Riley M."/>
        </authorList>
    </citation>
    <scope>NUCLEOTIDE SEQUENCE [LARGE SCALE GENOMIC DNA]</scope>
    <source>
        <strain>DSM 17167 / CIP 108236 / LMG 21445 / STM815</strain>
    </source>
</reference>
<feature type="chain" id="PRO_1000089238" description="UPF0060 membrane protein Bphy_5052">
    <location>
        <begin position="1"/>
        <end position="106"/>
    </location>
</feature>
<feature type="transmembrane region" description="Helical" evidence="1">
    <location>
        <begin position="4"/>
        <end position="24"/>
    </location>
</feature>
<feature type="transmembrane region" description="Helical" evidence="1">
    <location>
        <begin position="30"/>
        <end position="50"/>
    </location>
</feature>
<feature type="transmembrane region" description="Helical" evidence="1">
    <location>
        <begin position="58"/>
        <end position="78"/>
    </location>
</feature>
<feature type="transmembrane region" description="Helical" evidence="1">
    <location>
        <begin position="82"/>
        <end position="102"/>
    </location>
</feature>
<sequence length="106" mass="11590">MRTLLLYVVTAVAEIVGCYLPWRWLKEGGSVWLLLPGALSLALFAWLLTFHGTAAGRVYAAYGGVYVAVAILWLWCVDHVRPSAWDLAGVALTLAGMSIIAFQPRL</sequence>
<accession>B2JLR2</accession>
<dbReference type="EMBL" id="CP001044">
    <property type="protein sequence ID" value="ACC74140.1"/>
    <property type="molecule type" value="Genomic_DNA"/>
</dbReference>
<dbReference type="RefSeq" id="WP_012404304.1">
    <property type="nucleotide sequence ID" value="NC_010623.1"/>
</dbReference>
<dbReference type="SMR" id="B2JLR2"/>
<dbReference type="KEGG" id="bph:Bphy_5052"/>
<dbReference type="eggNOG" id="COG1742">
    <property type="taxonomic scope" value="Bacteria"/>
</dbReference>
<dbReference type="HOGENOM" id="CLU_117653_2_0_4"/>
<dbReference type="OrthoDB" id="123240at2"/>
<dbReference type="Proteomes" id="UP000001192">
    <property type="component" value="Chromosome 2"/>
</dbReference>
<dbReference type="GO" id="GO:0005886">
    <property type="term" value="C:plasma membrane"/>
    <property type="evidence" value="ECO:0007669"/>
    <property type="project" value="UniProtKB-SubCell"/>
</dbReference>
<dbReference type="HAMAP" id="MF_00010">
    <property type="entry name" value="UPF0060"/>
    <property type="match status" value="1"/>
</dbReference>
<dbReference type="InterPro" id="IPR003844">
    <property type="entry name" value="UPF0060"/>
</dbReference>
<dbReference type="NCBIfam" id="NF002586">
    <property type="entry name" value="PRK02237.1"/>
    <property type="match status" value="1"/>
</dbReference>
<dbReference type="PANTHER" id="PTHR36116">
    <property type="entry name" value="UPF0060 MEMBRANE PROTEIN YNFA"/>
    <property type="match status" value="1"/>
</dbReference>
<dbReference type="PANTHER" id="PTHR36116:SF1">
    <property type="entry name" value="UPF0060 MEMBRANE PROTEIN YNFA"/>
    <property type="match status" value="1"/>
</dbReference>
<dbReference type="Pfam" id="PF02694">
    <property type="entry name" value="UPF0060"/>
    <property type="match status" value="1"/>
</dbReference>
<dbReference type="SUPFAM" id="SSF103481">
    <property type="entry name" value="Multidrug resistance efflux transporter EmrE"/>
    <property type="match status" value="1"/>
</dbReference>
<proteinExistence type="inferred from homology"/>
<organism>
    <name type="scientific">Paraburkholderia phymatum (strain DSM 17167 / CIP 108236 / LMG 21445 / STM815)</name>
    <name type="common">Burkholderia phymatum</name>
    <dbReference type="NCBI Taxonomy" id="391038"/>
    <lineage>
        <taxon>Bacteria</taxon>
        <taxon>Pseudomonadati</taxon>
        <taxon>Pseudomonadota</taxon>
        <taxon>Betaproteobacteria</taxon>
        <taxon>Burkholderiales</taxon>
        <taxon>Burkholderiaceae</taxon>
        <taxon>Paraburkholderia</taxon>
    </lineage>
</organism>
<comment type="subcellular location">
    <subcellularLocation>
        <location evidence="1">Cell inner membrane</location>
        <topology evidence="1">Multi-pass membrane protein</topology>
    </subcellularLocation>
</comment>
<comment type="similarity">
    <text evidence="1">Belongs to the UPF0060 family.</text>
</comment>
<gene>
    <name type="ordered locus">Bphy_5052</name>
</gene>
<protein>
    <recommendedName>
        <fullName evidence="1">UPF0060 membrane protein Bphy_5052</fullName>
    </recommendedName>
</protein>